<sequence>MLYYPHIDPVAFRLGPLKVHWYGLMYLVGFAMAWGLALYRARDPKRHWTAQQVGDLIFYGALGLIIGGRLGYMLFYDFSNFIANPLTLFQVWRGGMSFHGGLIGVIVTTWIFSRRTHKRWMDVTDFVVPLVPLGLAAGRIGNFINGELWGRVTTVPWGMVFPNAGPLPRHPSQLYEFLLEGVLLFIVIWWFSAKLRPRFAVSSLFLLCYGLFRFTAEFFRQPDPQLGFVAFGWLTRGQELSLPMIIIGGFALWWAYRHKER</sequence>
<comment type="function">
    <text evidence="1">Catalyzes the transfer of the diacylglyceryl group from phosphatidylglycerol to the sulfhydryl group of the N-terminal cysteine of a prolipoprotein, the first step in the formation of mature lipoproteins.</text>
</comment>
<comment type="catalytic activity">
    <reaction evidence="1">
        <text>L-cysteinyl-[prolipoprotein] + a 1,2-diacyl-sn-glycero-3-phospho-(1'-sn-glycerol) = an S-1,2-diacyl-sn-glyceryl-L-cysteinyl-[prolipoprotein] + sn-glycerol 1-phosphate + H(+)</text>
        <dbReference type="Rhea" id="RHEA:56712"/>
        <dbReference type="Rhea" id="RHEA-COMP:14679"/>
        <dbReference type="Rhea" id="RHEA-COMP:14680"/>
        <dbReference type="ChEBI" id="CHEBI:15378"/>
        <dbReference type="ChEBI" id="CHEBI:29950"/>
        <dbReference type="ChEBI" id="CHEBI:57685"/>
        <dbReference type="ChEBI" id="CHEBI:64716"/>
        <dbReference type="ChEBI" id="CHEBI:140658"/>
        <dbReference type="EC" id="2.5.1.145"/>
    </reaction>
</comment>
<comment type="pathway">
    <text evidence="1">Protein modification; lipoprotein biosynthesis (diacylglyceryl transfer).</text>
</comment>
<comment type="subcellular location">
    <subcellularLocation>
        <location evidence="1">Cell inner membrane</location>
        <topology evidence="1">Multi-pass membrane protein</topology>
    </subcellularLocation>
</comment>
<comment type="similarity">
    <text evidence="1">Belongs to the Lgt family.</text>
</comment>
<protein>
    <recommendedName>
        <fullName evidence="1">Phosphatidylglycerol--prolipoprotein diacylglyceryl transferase</fullName>
        <ecNumber evidence="1">2.5.1.145</ecNumber>
    </recommendedName>
</protein>
<name>LGT_COXB1</name>
<gene>
    <name evidence="1" type="primary">lgt</name>
    <name type="ordered locus">CbuK_1775</name>
</gene>
<dbReference type="EC" id="2.5.1.145" evidence="1"/>
<dbReference type="EMBL" id="CP001020">
    <property type="protein sequence ID" value="ACJ20904.1"/>
    <property type="molecule type" value="Genomic_DNA"/>
</dbReference>
<dbReference type="RefSeq" id="WP_005772080.1">
    <property type="nucleotide sequence ID" value="NC_011528.1"/>
</dbReference>
<dbReference type="SMR" id="B6J4N9"/>
<dbReference type="KEGG" id="cbc:CbuK_1775"/>
<dbReference type="HOGENOM" id="CLU_013386_1_0_6"/>
<dbReference type="UniPathway" id="UPA00664"/>
<dbReference type="GO" id="GO:0005886">
    <property type="term" value="C:plasma membrane"/>
    <property type="evidence" value="ECO:0007669"/>
    <property type="project" value="UniProtKB-SubCell"/>
</dbReference>
<dbReference type="GO" id="GO:0008961">
    <property type="term" value="F:phosphatidylglycerol-prolipoprotein diacylglyceryl transferase activity"/>
    <property type="evidence" value="ECO:0007669"/>
    <property type="project" value="UniProtKB-UniRule"/>
</dbReference>
<dbReference type="GO" id="GO:0042158">
    <property type="term" value="P:lipoprotein biosynthetic process"/>
    <property type="evidence" value="ECO:0007669"/>
    <property type="project" value="UniProtKB-UniRule"/>
</dbReference>
<dbReference type="HAMAP" id="MF_01147">
    <property type="entry name" value="Lgt"/>
    <property type="match status" value="1"/>
</dbReference>
<dbReference type="InterPro" id="IPR001640">
    <property type="entry name" value="Lgt"/>
</dbReference>
<dbReference type="NCBIfam" id="TIGR00544">
    <property type="entry name" value="lgt"/>
    <property type="match status" value="1"/>
</dbReference>
<dbReference type="PANTHER" id="PTHR30589:SF0">
    <property type="entry name" value="PHOSPHATIDYLGLYCEROL--PROLIPOPROTEIN DIACYLGLYCERYL TRANSFERASE"/>
    <property type="match status" value="1"/>
</dbReference>
<dbReference type="PANTHER" id="PTHR30589">
    <property type="entry name" value="PROLIPOPROTEIN DIACYLGLYCERYL TRANSFERASE"/>
    <property type="match status" value="1"/>
</dbReference>
<dbReference type="Pfam" id="PF01790">
    <property type="entry name" value="LGT"/>
    <property type="match status" value="1"/>
</dbReference>
<dbReference type="PROSITE" id="PS01311">
    <property type="entry name" value="LGT"/>
    <property type="match status" value="1"/>
</dbReference>
<feature type="chain" id="PRO_1000137416" description="Phosphatidylglycerol--prolipoprotein diacylglyceryl transferase">
    <location>
        <begin position="1"/>
        <end position="261"/>
    </location>
</feature>
<feature type="transmembrane region" description="Helical" evidence="1">
    <location>
        <begin position="19"/>
        <end position="39"/>
    </location>
</feature>
<feature type="transmembrane region" description="Helical" evidence="1">
    <location>
        <begin position="56"/>
        <end position="76"/>
    </location>
</feature>
<feature type="transmembrane region" description="Helical" evidence="1">
    <location>
        <begin position="92"/>
        <end position="112"/>
    </location>
</feature>
<feature type="transmembrane region" description="Helical" evidence="1">
    <location>
        <begin position="126"/>
        <end position="146"/>
    </location>
</feature>
<feature type="transmembrane region" description="Helical" evidence="1">
    <location>
        <begin position="173"/>
        <end position="193"/>
    </location>
</feature>
<feature type="transmembrane region" description="Helical" evidence="1">
    <location>
        <begin position="199"/>
        <end position="219"/>
    </location>
</feature>
<feature type="transmembrane region" description="Helical" evidence="1">
    <location>
        <begin position="227"/>
        <end position="247"/>
    </location>
</feature>
<feature type="binding site" evidence="1">
    <location>
        <position position="139"/>
    </location>
    <ligand>
        <name>a 1,2-diacyl-sn-glycero-3-phospho-(1'-sn-glycerol)</name>
        <dbReference type="ChEBI" id="CHEBI:64716"/>
    </ligand>
</feature>
<reference key="1">
    <citation type="journal article" date="2009" name="Infect. Immun.">
        <title>Comparative genomics reveal extensive transposon-mediated genomic plasticity and diversity among potential effector proteins within the genus Coxiella.</title>
        <authorList>
            <person name="Beare P.A."/>
            <person name="Unsworth N."/>
            <person name="Andoh M."/>
            <person name="Voth D.E."/>
            <person name="Omsland A."/>
            <person name="Gilk S.D."/>
            <person name="Williams K.P."/>
            <person name="Sobral B.W."/>
            <person name="Kupko J.J. III"/>
            <person name="Porcella S.F."/>
            <person name="Samuel J.E."/>
            <person name="Heinzen R.A."/>
        </authorList>
    </citation>
    <scope>NUCLEOTIDE SEQUENCE [LARGE SCALE GENOMIC DNA]</scope>
    <source>
        <strain>CbuK_Q154</strain>
    </source>
</reference>
<organism>
    <name type="scientific">Coxiella burnetii (strain CbuK_Q154)</name>
    <name type="common">Coxiella burnetii (strain Q154)</name>
    <dbReference type="NCBI Taxonomy" id="434924"/>
    <lineage>
        <taxon>Bacteria</taxon>
        <taxon>Pseudomonadati</taxon>
        <taxon>Pseudomonadota</taxon>
        <taxon>Gammaproteobacteria</taxon>
        <taxon>Legionellales</taxon>
        <taxon>Coxiellaceae</taxon>
        <taxon>Coxiella</taxon>
    </lineage>
</organism>
<proteinExistence type="inferred from homology"/>
<accession>B6J4N9</accession>
<keyword id="KW-0997">Cell inner membrane</keyword>
<keyword id="KW-1003">Cell membrane</keyword>
<keyword id="KW-0472">Membrane</keyword>
<keyword id="KW-0808">Transferase</keyword>
<keyword id="KW-0812">Transmembrane</keyword>
<keyword id="KW-1133">Transmembrane helix</keyword>
<evidence type="ECO:0000255" key="1">
    <source>
        <dbReference type="HAMAP-Rule" id="MF_01147"/>
    </source>
</evidence>